<accession>Q65I39</accession>
<accession>Q62TI9</accession>
<proteinExistence type="inferred from homology"/>
<organism>
    <name type="scientific">Bacillus licheniformis (strain ATCC 14580 / DSM 13 / JCM 2505 / CCUG 7422 / NBRC 12200 / NCIMB 9375 / NCTC 10341 / NRRL NRS-1264 / Gibson 46)</name>
    <dbReference type="NCBI Taxonomy" id="279010"/>
    <lineage>
        <taxon>Bacteria</taxon>
        <taxon>Bacillati</taxon>
        <taxon>Bacillota</taxon>
        <taxon>Bacilli</taxon>
        <taxon>Bacillales</taxon>
        <taxon>Bacillaceae</taxon>
        <taxon>Bacillus</taxon>
    </lineage>
</organism>
<evidence type="ECO:0000255" key="1">
    <source>
        <dbReference type="HAMAP-Rule" id="MF_00210"/>
    </source>
</evidence>
<sequence length="428" mass="45522">MKRGKISSLKGELHIPGDKSISHRSVMFGAMAEGKTVIKNFLPGADCLSTIACFRKMGVEIEQNGSDVTVRGKGLDQLAEPAELLDVGNSGTTIRLMLGILAGRPFHSTVAGDESIAKRPMKRVTEPLRKMGAKIDGRAGGEYTPLSVRGGHLKAIDFQSPVASAQIKSAVLLAGLQAEGTTTVTEPHKSRDHTERMLSMFGVSLREDETSVSIEGGQQLKAAEVFVPGDISSAAFFLAAASLVPGSEVVLRNVGLNPTRTGIIDVLKEMGADLEIEEKDTGNTEPYGDLRIKTSSLKAAEISGDLIPRLIDEIPIIALLATQAEGTTVIKDAAELKVKETNRIDTVASELKKIGANIEPTEDGMKIHGKTPLTGGAKVSSHGDHRIGMMLGIAACICEQPIDILQPEAVSVSYPSFFEHIEKLAEKA</sequence>
<reference key="1">
    <citation type="journal article" date="2004" name="J. Mol. Microbiol. Biotechnol.">
        <title>The complete genome sequence of Bacillus licheniformis DSM13, an organism with great industrial potential.</title>
        <authorList>
            <person name="Veith B."/>
            <person name="Herzberg C."/>
            <person name="Steckel S."/>
            <person name="Feesche J."/>
            <person name="Maurer K.H."/>
            <person name="Ehrenreich P."/>
            <person name="Baeumer S."/>
            <person name="Henne A."/>
            <person name="Liesegang H."/>
            <person name="Merkl R."/>
            <person name="Ehrenreich A."/>
            <person name="Gottschalk G."/>
        </authorList>
    </citation>
    <scope>NUCLEOTIDE SEQUENCE [LARGE SCALE GENOMIC DNA]</scope>
    <source>
        <strain>ATCC 14580 / DSM 13 / JCM 2505 / CCUG 7422 / NBRC 12200 / NCIMB 9375 / NCTC 10341 / NRRL NRS-1264 / Gibson 46</strain>
    </source>
</reference>
<reference key="2">
    <citation type="journal article" date="2004" name="Genome Biol.">
        <title>Complete genome sequence of the industrial bacterium Bacillus licheniformis and comparisons with closely related Bacillus species.</title>
        <authorList>
            <person name="Rey M.W."/>
            <person name="Ramaiya P."/>
            <person name="Nelson B.A."/>
            <person name="Brody-Karpin S.D."/>
            <person name="Zaretsky E.J."/>
            <person name="Tang M."/>
            <person name="Lopez de Leon A."/>
            <person name="Xiang H."/>
            <person name="Gusti V."/>
            <person name="Clausen I.G."/>
            <person name="Olsen P.B."/>
            <person name="Rasmussen M.D."/>
            <person name="Andersen J.T."/>
            <person name="Joergensen P.L."/>
            <person name="Larsen T.S."/>
            <person name="Sorokin A."/>
            <person name="Bolotin A."/>
            <person name="Lapidus A."/>
            <person name="Galleron N."/>
            <person name="Ehrlich S.D."/>
            <person name="Berka R.M."/>
        </authorList>
    </citation>
    <scope>NUCLEOTIDE SEQUENCE [LARGE SCALE GENOMIC DNA]</scope>
    <source>
        <strain>ATCC 14580 / DSM 13 / JCM 2505 / CCUG 7422 / NBRC 12200 / NCIMB 9375 / NCTC 10341 / NRRL NRS-1264 / Gibson 46</strain>
    </source>
</reference>
<comment type="function">
    <text evidence="1">Catalyzes the transfer of the enolpyruvyl moiety of phosphoenolpyruvate (PEP) to the 5-hydroxyl of shikimate-3-phosphate (S3P) to produce enolpyruvyl shikimate-3-phosphate and inorganic phosphate.</text>
</comment>
<comment type="catalytic activity">
    <reaction evidence="1">
        <text>3-phosphoshikimate + phosphoenolpyruvate = 5-O-(1-carboxyvinyl)-3-phosphoshikimate + phosphate</text>
        <dbReference type="Rhea" id="RHEA:21256"/>
        <dbReference type="ChEBI" id="CHEBI:43474"/>
        <dbReference type="ChEBI" id="CHEBI:57701"/>
        <dbReference type="ChEBI" id="CHEBI:58702"/>
        <dbReference type="ChEBI" id="CHEBI:145989"/>
        <dbReference type="EC" id="2.5.1.19"/>
    </reaction>
    <physiologicalReaction direction="left-to-right" evidence="1">
        <dbReference type="Rhea" id="RHEA:21257"/>
    </physiologicalReaction>
</comment>
<comment type="pathway">
    <text evidence="1">Metabolic intermediate biosynthesis; chorismate biosynthesis; chorismate from D-erythrose 4-phosphate and phosphoenolpyruvate: step 6/7.</text>
</comment>
<comment type="subunit">
    <text evidence="1">Monomer.</text>
</comment>
<comment type="subcellular location">
    <subcellularLocation>
        <location evidence="1">Cytoplasm</location>
    </subcellularLocation>
</comment>
<comment type="similarity">
    <text evidence="1">Belongs to the EPSP synthase family.</text>
</comment>
<dbReference type="EC" id="2.5.1.19" evidence="1"/>
<dbReference type="EMBL" id="CP000002">
    <property type="protein sequence ID" value="AAU23920.3"/>
    <property type="molecule type" value="Genomic_DNA"/>
</dbReference>
<dbReference type="EMBL" id="AE017333">
    <property type="protein sequence ID" value="AAU41275.1"/>
    <property type="molecule type" value="Genomic_DNA"/>
</dbReference>
<dbReference type="RefSeq" id="WP_003182964.1">
    <property type="nucleotide sequence ID" value="NC_006322.1"/>
</dbReference>
<dbReference type="SMR" id="Q65I39"/>
<dbReference type="STRING" id="279010.BL02766"/>
<dbReference type="GeneID" id="92861005"/>
<dbReference type="KEGG" id="bld:BLi02395"/>
<dbReference type="KEGG" id="bli:BL02766"/>
<dbReference type="PATRIC" id="fig|279010.13.peg.2426"/>
<dbReference type="eggNOG" id="COG0128">
    <property type="taxonomic scope" value="Bacteria"/>
</dbReference>
<dbReference type="HOGENOM" id="CLU_024321_0_1_9"/>
<dbReference type="UniPathway" id="UPA00053">
    <property type="reaction ID" value="UER00089"/>
</dbReference>
<dbReference type="Proteomes" id="UP000000606">
    <property type="component" value="Chromosome"/>
</dbReference>
<dbReference type="Bgee" id="BL02766">
    <property type="expression patterns" value="Expressed in pharyngeal slit and 1 other cell type or tissue"/>
</dbReference>
<dbReference type="GO" id="GO:0005737">
    <property type="term" value="C:cytoplasm"/>
    <property type="evidence" value="ECO:0007669"/>
    <property type="project" value="UniProtKB-SubCell"/>
</dbReference>
<dbReference type="GO" id="GO:0003866">
    <property type="term" value="F:3-phosphoshikimate 1-carboxyvinyltransferase activity"/>
    <property type="evidence" value="ECO:0007669"/>
    <property type="project" value="UniProtKB-UniRule"/>
</dbReference>
<dbReference type="GO" id="GO:0008652">
    <property type="term" value="P:amino acid biosynthetic process"/>
    <property type="evidence" value="ECO:0007669"/>
    <property type="project" value="UniProtKB-KW"/>
</dbReference>
<dbReference type="GO" id="GO:0009073">
    <property type="term" value="P:aromatic amino acid family biosynthetic process"/>
    <property type="evidence" value="ECO:0007669"/>
    <property type="project" value="UniProtKB-KW"/>
</dbReference>
<dbReference type="GO" id="GO:0009423">
    <property type="term" value="P:chorismate biosynthetic process"/>
    <property type="evidence" value="ECO:0007669"/>
    <property type="project" value="UniProtKB-UniRule"/>
</dbReference>
<dbReference type="CDD" id="cd01556">
    <property type="entry name" value="EPSP_synthase"/>
    <property type="match status" value="1"/>
</dbReference>
<dbReference type="FunFam" id="3.65.10.10:FF:000005">
    <property type="entry name" value="3-phosphoshikimate 1-carboxyvinyltransferase"/>
    <property type="match status" value="1"/>
</dbReference>
<dbReference type="FunFam" id="3.65.10.10:FF:000006">
    <property type="entry name" value="3-phosphoshikimate 1-carboxyvinyltransferase"/>
    <property type="match status" value="1"/>
</dbReference>
<dbReference type="Gene3D" id="3.65.10.10">
    <property type="entry name" value="Enolpyruvate transferase domain"/>
    <property type="match status" value="2"/>
</dbReference>
<dbReference type="HAMAP" id="MF_00210">
    <property type="entry name" value="EPSP_synth"/>
    <property type="match status" value="1"/>
</dbReference>
<dbReference type="InterPro" id="IPR001986">
    <property type="entry name" value="Enolpyruvate_Tfrase_dom"/>
</dbReference>
<dbReference type="InterPro" id="IPR036968">
    <property type="entry name" value="Enolpyruvate_Tfrase_sf"/>
</dbReference>
<dbReference type="InterPro" id="IPR006264">
    <property type="entry name" value="EPSP_synthase"/>
</dbReference>
<dbReference type="InterPro" id="IPR023193">
    <property type="entry name" value="EPSP_synthase_CS"/>
</dbReference>
<dbReference type="InterPro" id="IPR013792">
    <property type="entry name" value="RNA3'P_cycl/enolpyr_Trfase_a/b"/>
</dbReference>
<dbReference type="NCBIfam" id="TIGR01356">
    <property type="entry name" value="aroA"/>
    <property type="match status" value="1"/>
</dbReference>
<dbReference type="PANTHER" id="PTHR21090">
    <property type="entry name" value="AROM/DEHYDROQUINATE SYNTHASE"/>
    <property type="match status" value="1"/>
</dbReference>
<dbReference type="PANTHER" id="PTHR21090:SF5">
    <property type="entry name" value="PENTAFUNCTIONAL AROM POLYPEPTIDE"/>
    <property type="match status" value="1"/>
</dbReference>
<dbReference type="Pfam" id="PF00275">
    <property type="entry name" value="EPSP_synthase"/>
    <property type="match status" value="1"/>
</dbReference>
<dbReference type="PIRSF" id="PIRSF000505">
    <property type="entry name" value="EPSPS"/>
    <property type="match status" value="1"/>
</dbReference>
<dbReference type="SUPFAM" id="SSF55205">
    <property type="entry name" value="EPT/RTPC-like"/>
    <property type="match status" value="1"/>
</dbReference>
<dbReference type="PROSITE" id="PS00104">
    <property type="entry name" value="EPSP_SYNTHASE_1"/>
    <property type="match status" value="1"/>
</dbReference>
<dbReference type="PROSITE" id="PS00885">
    <property type="entry name" value="EPSP_SYNTHASE_2"/>
    <property type="match status" value="1"/>
</dbReference>
<feature type="chain" id="PRO_0000325332" description="3-phosphoshikimate 1-carboxyvinyltransferase">
    <location>
        <begin position="1"/>
        <end position="428"/>
    </location>
</feature>
<feature type="active site" description="Proton acceptor" evidence="1">
    <location>
        <position position="312"/>
    </location>
</feature>
<feature type="binding site" evidence="1">
    <location>
        <position position="19"/>
    </location>
    <ligand>
        <name>3-phosphoshikimate</name>
        <dbReference type="ChEBI" id="CHEBI:145989"/>
    </ligand>
</feature>
<feature type="binding site" evidence="1">
    <location>
        <position position="19"/>
    </location>
    <ligand>
        <name>phosphoenolpyruvate</name>
        <dbReference type="ChEBI" id="CHEBI:58702"/>
    </ligand>
</feature>
<feature type="binding site" evidence="1">
    <location>
        <position position="20"/>
    </location>
    <ligand>
        <name>3-phosphoshikimate</name>
        <dbReference type="ChEBI" id="CHEBI:145989"/>
    </ligand>
</feature>
<feature type="binding site" evidence="1">
    <location>
        <position position="24"/>
    </location>
    <ligand>
        <name>3-phosphoshikimate</name>
        <dbReference type="ChEBI" id="CHEBI:145989"/>
    </ligand>
</feature>
<feature type="binding site" evidence="1">
    <location>
        <position position="91"/>
    </location>
    <ligand>
        <name>phosphoenolpyruvate</name>
        <dbReference type="ChEBI" id="CHEBI:58702"/>
    </ligand>
</feature>
<feature type="binding site" evidence="1">
    <location>
        <position position="119"/>
    </location>
    <ligand>
        <name>phosphoenolpyruvate</name>
        <dbReference type="ChEBI" id="CHEBI:58702"/>
    </ligand>
</feature>
<feature type="binding site" evidence="1">
    <location>
        <position position="164"/>
    </location>
    <ligand>
        <name>3-phosphoshikimate</name>
        <dbReference type="ChEBI" id="CHEBI:145989"/>
    </ligand>
</feature>
<feature type="binding site" evidence="1">
    <location>
        <position position="166"/>
    </location>
    <ligand>
        <name>3-phosphoshikimate</name>
        <dbReference type="ChEBI" id="CHEBI:145989"/>
    </ligand>
</feature>
<feature type="binding site" evidence="1">
    <location>
        <position position="166"/>
    </location>
    <ligand>
        <name>phosphoenolpyruvate</name>
        <dbReference type="ChEBI" id="CHEBI:58702"/>
    </ligand>
</feature>
<feature type="binding site" evidence="1">
    <location>
        <position position="312"/>
    </location>
    <ligand>
        <name>3-phosphoshikimate</name>
        <dbReference type="ChEBI" id="CHEBI:145989"/>
    </ligand>
</feature>
<feature type="binding site" evidence="1">
    <location>
        <position position="339"/>
    </location>
    <ligand>
        <name>3-phosphoshikimate</name>
        <dbReference type="ChEBI" id="CHEBI:145989"/>
    </ligand>
</feature>
<feature type="binding site" evidence="1">
    <location>
        <position position="343"/>
    </location>
    <ligand>
        <name>phosphoenolpyruvate</name>
        <dbReference type="ChEBI" id="CHEBI:58702"/>
    </ligand>
</feature>
<feature type="binding site" evidence="1">
    <location>
        <position position="386"/>
    </location>
    <ligand>
        <name>phosphoenolpyruvate</name>
        <dbReference type="ChEBI" id="CHEBI:58702"/>
    </ligand>
</feature>
<keyword id="KW-0028">Amino-acid biosynthesis</keyword>
<keyword id="KW-0057">Aromatic amino acid biosynthesis</keyword>
<keyword id="KW-0963">Cytoplasm</keyword>
<keyword id="KW-1185">Reference proteome</keyword>
<keyword id="KW-0808">Transferase</keyword>
<name>AROA_BACLD</name>
<gene>
    <name evidence="1" type="primary">aroA</name>
    <name type="ordered locus">BLi02395</name>
    <name type="ordered locus">BL02766</name>
</gene>
<protein>
    <recommendedName>
        <fullName evidence="1">3-phosphoshikimate 1-carboxyvinyltransferase</fullName>
        <ecNumber evidence="1">2.5.1.19</ecNumber>
    </recommendedName>
    <alternativeName>
        <fullName evidence="1">5-enolpyruvylshikimate-3-phosphate synthase</fullName>
        <shortName evidence="1">EPSP synthase</shortName>
        <shortName evidence="1">EPSPS</shortName>
    </alternativeName>
</protein>